<comment type="catalytic activity">
    <reaction evidence="1">
        <text>tRNA(Lys) + L-lysine + ATP = L-lysyl-tRNA(Lys) + AMP + diphosphate</text>
        <dbReference type="Rhea" id="RHEA:20792"/>
        <dbReference type="Rhea" id="RHEA-COMP:9696"/>
        <dbReference type="Rhea" id="RHEA-COMP:9697"/>
        <dbReference type="ChEBI" id="CHEBI:30616"/>
        <dbReference type="ChEBI" id="CHEBI:32551"/>
        <dbReference type="ChEBI" id="CHEBI:33019"/>
        <dbReference type="ChEBI" id="CHEBI:78442"/>
        <dbReference type="ChEBI" id="CHEBI:78529"/>
        <dbReference type="ChEBI" id="CHEBI:456215"/>
        <dbReference type="EC" id="6.1.1.6"/>
    </reaction>
</comment>
<comment type="cofactor">
    <cofactor evidence="1">
        <name>Mg(2+)</name>
        <dbReference type="ChEBI" id="CHEBI:18420"/>
    </cofactor>
    <text evidence="1">Binds 3 Mg(2+) ions per subunit.</text>
</comment>
<comment type="subunit">
    <text evidence="1">Homodimer.</text>
</comment>
<comment type="subcellular location">
    <subcellularLocation>
        <location evidence="1">Cytoplasm</location>
    </subcellularLocation>
</comment>
<comment type="similarity">
    <text evidence="1">Belongs to the class-II aminoacyl-tRNA synthetase family.</text>
</comment>
<reference key="1">
    <citation type="journal article" date="2004" name="Nat. Genet.">
        <title>Comparison of genome degradation in Paratyphi A and Typhi, human-restricted serovars of Salmonella enterica that cause typhoid.</title>
        <authorList>
            <person name="McClelland M."/>
            <person name="Sanderson K.E."/>
            <person name="Clifton S.W."/>
            <person name="Latreille P."/>
            <person name="Porwollik S."/>
            <person name="Sabo A."/>
            <person name="Meyer R."/>
            <person name="Bieri T."/>
            <person name="Ozersky P."/>
            <person name="McLellan M."/>
            <person name="Harkins C.R."/>
            <person name="Wang C."/>
            <person name="Nguyen C."/>
            <person name="Berghoff A."/>
            <person name="Elliott G."/>
            <person name="Kohlberg S."/>
            <person name="Strong C."/>
            <person name="Du F."/>
            <person name="Carter J."/>
            <person name="Kremizki C."/>
            <person name="Layman D."/>
            <person name="Leonard S."/>
            <person name="Sun H."/>
            <person name="Fulton L."/>
            <person name="Nash W."/>
            <person name="Miner T."/>
            <person name="Minx P."/>
            <person name="Delehaunty K."/>
            <person name="Fronick C."/>
            <person name="Magrini V."/>
            <person name="Nhan M."/>
            <person name="Warren W."/>
            <person name="Florea L."/>
            <person name="Spieth J."/>
            <person name="Wilson R.K."/>
        </authorList>
    </citation>
    <scope>NUCLEOTIDE SEQUENCE [LARGE SCALE GENOMIC DNA]</scope>
    <source>
        <strain>ATCC 9150 / SARB42</strain>
    </source>
</reference>
<gene>
    <name evidence="1" type="primary">lysS</name>
    <name type="ordered locus">SPA2908</name>
</gene>
<accession>Q5PL30</accession>
<name>SYK_SALPA</name>
<protein>
    <recommendedName>
        <fullName evidence="1">Lysine--tRNA ligase</fullName>
        <ecNumber evidence="1">6.1.1.6</ecNumber>
    </recommendedName>
    <alternativeName>
        <fullName evidence="1">Lysyl-tRNA synthetase</fullName>
        <shortName evidence="1">LysRS</shortName>
    </alternativeName>
</protein>
<dbReference type="EC" id="6.1.1.6" evidence="1"/>
<dbReference type="EMBL" id="CP000026">
    <property type="protein sequence ID" value="AAV78749.1"/>
    <property type="molecule type" value="Genomic_DNA"/>
</dbReference>
<dbReference type="RefSeq" id="WP_000003339.1">
    <property type="nucleotide sequence ID" value="NC_006511.1"/>
</dbReference>
<dbReference type="SMR" id="Q5PL30"/>
<dbReference type="KEGG" id="spt:SPA2908"/>
<dbReference type="HOGENOM" id="CLU_008255_6_0_6"/>
<dbReference type="Proteomes" id="UP000008185">
    <property type="component" value="Chromosome"/>
</dbReference>
<dbReference type="GO" id="GO:0005829">
    <property type="term" value="C:cytosol"/>
    <property type="evidence" value="ECO:0007669"/>
    <property type="project" value="TreeGrafter"/>
</dbReference>
<dbReference type="GO" id="GO:0005524">
    <property type="term" value="F:ATP binding"/>
    <property type="evidence" value="ECO:0007669"/>
    <property type="project" value="UniProtKB-UniRule"/>
</dbReference>
<dbReference type="GO" id="GO:0004824">
    <property type="term" value="F:lysine-tRNA ligase activity"/>
    <property type="evidence" value="ECO:0007669"/>
    <property type="project" value="UniProtKB-UniRule"/>
</dbReference>
<dbReference type="GO" id="GO:0000287">
    <property type="term" value="F:magnesium ion binding"/>
    <property type="evidence" value="ECO:0007669"/>
    <property type="project" value="UniProtKB-UniRule"/>
</dbReference>
<dbReference type="GO" id="GO:0000049">
    <property type="term" value="F:tRNA binding"/>
    <property type="evidence" value="ECO:0007669"/>
    <property type="project" value="TreeGrafter"/>
</dbReference>
<dbReference type="GO" id="GO:0006430">
    <property type="term" value="P:lysyl-tRNA aminoacylation"/>
    <property type="evidence" value="ECO:0007669"/>
    <property type="project" value="UniProtKB-UniRule"/>
</dbReference>
<dbReference type="CDD" id="cd00775">
    <property type="entry name" value="LysRS_core"/>
    <property type="match status" value="1"/>
</dbReference>
<dbReference type="CDD" id="cd04322">
    <property type="entry name" value="LysRS_N"/>
    <property type="match status" value="1"/>
</dbReference>
<dbReference type="FunFam" id="2.40.50.140:FF:000024">
    <property type="entry name" value="Lysine--tRNA ligase"/>
    <property type="match status" value="1"/>
</dbReference>
<dbReference type="FunFam" id="3.30.930.10:FF:000001">
    <property type="entry name" value="Lysine--tRNA ligase"/>
    <property type="match status" value="1"/>
</dbReference>
<dbReference type="Gene3D" id="3.30.930.10">
    <property type="entry name" value="Bira Bifunctional Protein, Domain 2"/>
    <property type="match status" value="1"/>
</dbReference>
<dbReference type="Gene3D" id="2.40.50.140">
    <property type="entry name" value="Nucleic acid-binding proteins"/>
    <property type="match status" value="1"/>
</dbReference>
<dbReference type="HAMAP" id="MF_00252">
    <property type="entry name" value="Lys_tRNA_synth_class2"/>
    <property type="match status" value="1"/>
</dbReference>
<dbReference type="InterPro" id="IPR004364">
    <property type="entry name" value="Aa-tRNA-synt_II"/>
</dbReference>
<dbReference type="InterPro" id="IPR006195">
    <property type="entry name" value="aa-tRNA-synth_II"/>
</dbReference>
<dbReference type="InterPro" id="IPR045864">
    <property type="entry name" value="aa-tRNA-synth_II/BPL/LPL"/>
</dbReference>
<dbReference type="InterPro" id="IPR002313">
    <property type="entry name" value="Lys-tRNA-ligase_II"/>
</dbReference>
<dbReference type="InterPro" id="IPR034762">
    <property type="entry name" value="Lys-tRNA-ligase_II_bac/euk"/>
</dbReference>
<dbReference type="InterPro" id="IPR044136">
    <property type="entry name" value="Lys-tRNA-ligase_II_N"/>
</dbReference>
<dbReference type="InterPro" id="IPR018149">
    <property type="entry name" value="Lys-tRNA-synth_II_C"/>
</dbReference>
<dbReference type="InterPro" id="IPR012340">
    <property type="entry name" value="NA-bd_OB-fold"/>
</dbReference>
<dbReference type="InterPro" id="IPR004365">
    <property type="entry name" value="NA-bd_OB_tRNA"/>
</dbReference>
<dbReference type="NCBIfam" id="TIGR00499">
    <property type="entry name" value="lysS_bact"/>
    <property type="match status" value="1"/>
</dbReference>
<dbReference type="NCBIfam" id="NF001756">
    <property type="entry name" value="PRK00484.1"/>
    <property type="match status" value="1"/>
</dbReference>
<dbReference type="NCBIfam" id="NF009101">
    <property type="entry name" value="PRK12445.1"/>
    <property type="match status" value="1"/>
</dbReference>
<dbReference type="PANTHER" id="PTHR42918:SF15">
    <property type="entry name" value="LYSINE--TRNA LIGASE, CHLOROPLASTIC_MITOCHONDRIAL"/>
    <property type="match status" value="1"/>
</dbReference>
<dbReference type="PANTHER" id="PTHR42918">
    <property type="entry name" value="LYSYL-TRNA SYNTHETASE"/>
    <property type="match status" value="1"/>
</dbReference>
<dbReference type="Pfam" id="PF00152">
    <property type="entry name" value="tRNA-synt_2"/>
    <property type="match status" value="1"/>
</dbReference>
<dbReference type="Pfam" id="PF01336">
    <property type="entry name" value="tRNA_anti-codon"/>
    <property type="match status" value="1"/>
</dbReference>
<dbReference type="PIRSF" id="PIRSF039101">
    <property type="entry name" value="LysRS2"/>
    <property type="match status" value="1"/>
</dbReference>
<dbReference type="PRINTS" id="PR00982">
    <property type="entry name" value="TRNASYNTHLYS"/>
</dbReference>
<dbReference type="SUPFAM" id="SSF55681">
    <property type="entry name" value="Class II aaRS and biotin synthetases"/>
    <property type="match status" value="1"/>
</dbReference>
<dbReference type="SUPFAM" id="SSF50249">
    <property type="entry name" value="Nucleic acid-binding proteins"/>
    <property type="match status" value="1"/>
</dbReference>
<dbReference type="PROSITE" id="PS50862">
    <property type="entry name" value="AA_TRNA_LIGASE_II"/>
    <property type="match status" value="1"/>
</dbReference>
<sequence length="505" mass="57575">MSEQNAQGADEVVDLNNEMKARREKLAALREQGIPFPNDFRRDRTSDQLHAEFDAKEAEELEALNIEVSVAGRMMTRRIMGKASFVTLQDVGGRIQLYVARDDLPEGVYNEQFKKWDLGDILGAKGKLFKTKTGELSIHCTELRLLTKALRPLPDKFHGLQDQEARYRQRYLDLISNDESRNTFKTRSKILAGIRQFMVARGFMEVETPMMQVIPGGASARPFITHHNALDLDMYLRIAPELYLKRLVVGGFERVFEINRNFRNEGISVRHNPEFTMMELYMAYADYKDLIELTESLFRTLAQDVLGTTQVPYGDEVFDFGKPFEKLTMREAIKKYRPETDMADLDNFDSAKAIAESIGIHVEKSWGLGRIVTEIFDEVAEAHLIQPTFITEYPAEVSPLARRNDVNPEITDRFEFFIGGREIGNGFSELNDAEDQAQRFLDQVNAKAAGDDEAMFYDEDYVTALEHGLPPTAGLGIGIDRMVMLFTNSHTIRDVILFPAMRPVK</sequence>
<proteinExistence type="inferred from homology"/>
<organism>
    <name type="scientific">Salmonella paratyphi A (strain ATCC 9150 / SARB42)</name>
    <dbReference type="NCBI Taxonomy" id="295319"/>
    <lineage>
        <taxon>Bacteria</taxon>
        <taxon>Pseudomonadati</taxon>
        <taxon>Pseudomonadota</taxon>
        <taxon>Gammaproteobacteria</taxon>
        <taxon>Enterobacterales</taxon>
        <taxon>Enterobacteriaceae</taxon>
        <taxon>Salmonella</taxon>
    </lineage>
</organism>
<keyword id="KW-0030">Aminoacyl-tRNA synthetase</keyword>
<keyword id="KW-0067">ATP-binding</keyword>
<keyword id="KW-0963">Cytoplasm</keyword>
<keyword id="KW-0436">Ligase</keyword>
<keyword id="KW-0460">Magnesium</keyword>
<keyword id="KW-0479">Metal-binding</keyword>
<keyword id="KW-0547">Nucleotide-binding</keyword>
<keyword id="KW-0648">Protein biosynthesis</keyword>
<evidence type="ECO:0000255" key="1">
    <source>
        <dbReference type="HAMAP-Rule" id="MF_00252"/>
    </source>
</evidence>
<feature type="chain" id="PRO_1000012923" description="Lysine--tRNA ligase">
    <location>
        <begin position="1"/>
        <end position="505"/>
    </location>
</feature>
<feature type="binding site" evidence="1">
    <location>
        <position position="415"/>
    </location>
    <ligand>
        <name>Mg(2+)</name>
        <dbReference type="ChEBI" id="CHEBI:18420"/>
        <label>1</label>
    </ligand>
</feature>
<feature type="binding site" evidence="1">
    <location>
        <position position="422"/>
    </location>
    <ligand>
        <name>Mg(2+)</name>
        <dbReference type="ChEBI" id="CHEBI:18420"/>
        <label>1</label>
    </ligand>
</feature>
<feature type="binding site" evidence="1">
    <location>
        <position position="422"/>
    </location>
    <ligand>
        <name>Mg(2+)</name>
        <dbReference type="ChEBI" id="CHEBI:18420"/>
        <label>2</label>
    </ligand>
</feature>